<evidence type="ECO:0000255" key="1">
    <source>
        <dbReference type="HAMAP-Rule" id="MF_00185"/>
    </source>
</evidence>
<sequence length="304" mass="34568">MTVPVITGPTASGKSALAHRLALETGAEILSADSRQVYRELTIGSAKPSREMLREVAYHFINERAITEPFSAGAFALEATARIREIKRRGKRVIVAGGSALYLEGLISPFAELPPQNAEIRRKLSEQLADLGGELLYERLKQLDPEQAETLDPTKTHRLLRSLEIIEITGRTVTELQAKKSGEPSPPSSLHFKTFAIDIPREELYRQINRRTESMMEEGLLIEAEQLWKRYRIEIENKSLPALLTVGYQELFDHFRGRTTLDEAVTLIQQHTRNYAKRQLTFMRNRLTVQWMPADTDWTAHFTG</sequence>
<name>MIAA_CHLL3</name>
<gene>
    <name evidence="1" type="primary">miaA</name>
    <name type="ordered locus">Plut_1180</name>
</gene>
<feature type="chain" id="PRO_0000377259" description="tRNA dimethylallyltransferase">
    <location>
        <begin position="1"/>
        <end position="304"/>
    </location>
</feature>
<feature type="region of interest" description="Interaction with substrate tRNA" evidence="1">
    <location>
        <begin position="33"/>
        <end position="36"/>
    </location>
</feature>
<feature type="binding site" evidence="1">
    <location>
        <begin position="8"/>
        <end position="15"/>
    </location>
    <ligand>
        <name>ATP</name>
        <dbReference type="ChEBI" id="CHEBI:30616"/>
    </ligand>
</feature>
<feature type="binding site" evidence="1">
    <location>
        <begin position="10"/>
        <end position="15"/>
    </location>
    <ligand>
        <name>substrate</name>
    </ligand>
</feature>
<feature type="site" description="Interaction with substrate tRNA" evidence="1">
    <location>
        <position position="99"/>
    </location>
</feature>
<feature type="site" description="Interaction with substrate tRNA" evidence="1">
    <location>
        <position position="121"/>
    </location>
</feature>
<proteinExistence type="inferred from homology"/>
<keyword id="KW-0067">ATP-binding</keyword>
<keyword id="KW-0460">Magnesium</keyword>
<keyword id="KW-0547">Nucleotide-binding</keyword>
<keyword id="KW-1185">Reference proteome</keyword>
<keyword id="KW-0808">Transferase</keyword>
<keyword id="KW-0819">tRNA processing</keyword>
<comment type="function">
    <text evidence="1">Catalyzes the transfer of a dimethylallyl group onto the adenine at position 37 in tRNAs that read codons beginning with uridine, leading to the formation of N6-(dimethylallyl)adenosine (i(6)A).</text>
</comment>
<comment type="catalytic activity">
    <reaction evidence="1">
        <text>adenosine(37) in tRNA + dimethylallyl diphosphate = N(6)-dimethylallyladenosine(37) in tRNA + diphosphate</text>
        <dbReference type="Rhea" id="RHEA:26482"/>
        <dbReference type="Rhea" id="RHEA-COMP:10162"/>
        <dbReference type="Rhea" id="RHEA-COMP:10375"/>
        <dbReference type="ChEBI" id="CHEBI:33019"/>
        <dbReference type="ChEBI" id="CHEBI:57623"/>
        <dbReference type="ChEBI" id="CHEBI:74411"/>
        <dbReference type="ChEBI" id="CHEBI:74415"/>
        <dbReference type="EC" id="2.5.1.75"/>
    </reaction>
</comment>
<comment type="cofactor">
    <cofactor evidence="1">
        <name>Mg(2+)</name>
        <dbReference type="ChEBI" id="CHEBI:18420"/>
    </cofactor>
</comment>
<comment type="subunit">
    <text evidence="1">Monomer.</text>
</comment>
<comment type="similarity">
    <text evidence="1">Belongs to the IPP transferase family.</text>
</comment>
<accession>Q3B3N9</accession>
<reference key="1">
    <citation type="submission" date="2005-08" db="EMBL/GenBank/DDBJ databases">
        <title>Complete sequence of Pelodictyon luteolum DSM 273.</title>
        <authorList>
            <consortium name="US DOE Joint Genome Institute"/>
            <person name="Copeland A."/>
            <person name="Lucas S."/>
            <person name="Lapidus A."/>
            <person name="Barry K."/>
            <person name="Detter J.C."/>
            <person name="Glavina T."/>
            <person name="Hammon N."/>
            <person name="Israni S."/>
            <person name="Pitluck S."/>
            <person name="Bryant D."/>
            <person name="Schmutz J."/>
            <person name="Larimer F."/>
            <person name="Land M."/>
            <person name="Kyrpides N."/>
            <person name="Ivanova N."/>
            <person name="Richardson P."/>
        </authorList>
    </citation>
    <scope>NUCLEOTIDE SEQUENCE [LARGE SCALE GENOMIC DNA]</scope>
    <source>
        <strain>DSM 273 / BCRC 81028 / 2530</strain>
    </source>
</reference>
<organism>
    <name type="scientific">Chlorobium luteolum (strain DSM 273 / BCRC 81028 / 2530)</name>
    <name type="common">Pelodictyon luteolum</name>
    <dbReference type="NCBI Taxonomy" id="319225"/>
    <lineage>
        <taxon>Bacteria</taxon>
        <taxon>Pseudomonadati</taxon>
        <taxon>Chlorobiota</taxon>
        <taxon>Chlorobiia</taxon>
        <taxon>Chlorobiales</taxon>
        <taxon>Chlorobiaceae</taxon>
        <taxon>Chlorobium/Pelodictyon group</taxon>
        <taxon>Pelodictyon</taxon>
    </lineage>
</organism>
<protein>
    <recommendedName>
        <fullName evidence="1">tRNA dimethylallyltransferase</fullName>
        <ecNumber evidence="1">2.5.1.75</ecNumber>
    </recommendedName>
    <alternativeName>
        <fullName evidence="1">Dimethylallyl diphosphate:tRNA dimethylallyltransferase</fullName>
        <shortName evidence="1">DMAPP:tRNA dimethylallyltransferase</shortName>
        <shortName evidence="1">DMATase</shortName>
    </alternativeName>
    <alternativeName>
        <fullName evidence="1">Isopentenyl-diphosphate:tRNA isopentenyltransferase</fullName>
        <shortName evidence="1">IPP transferase</shortName>
        <shortName evidence="1">IPPT</shortName>
        <shortName evidence="1">IPTase</shortName>
    </alternativeName>
</protein>
<dbReference type="EC" id="2.5.1.75" evidence="1"/>
<dbReference type="EMBL" id="CP000096">
    <property type="protein sequence ID" value="ABB24042.1"/>
    <property type="molecule type" value="Genomic_DNA"/>
</dbReference>
<dbReference type="RefSeq" id="WP_011357914.1">
    <property type="nucleotide sequence ID" value="NC_007512.1"/>
</dbReference>
<dbReference type="SMR" id="Q3B3N9"/>
<dbReference type="STRING" id="319225.Plut_1180"/>
<dbReference type="KEGG" id="plt:Plut_1180"/>
<dbReference type="eggNOG" id="COG0324">
    <property type="taxonomic scope" value="Bacteria"/>
</dbReference>
<dbReference type="HOGENOM" id="CLU_032616_0_1_10"/>
<dbReference type="OrthoDB" id="9776390at2"/>
<dbReference type="Proteomes" id="UP000002709">
    <property type="component" value="Chromosome"/>
</dbReference>
<dbReference type="GO" id="GO:0005524">
    <property type="term" value="F:ATP binding"/>
    <property type="evidence" value="ECO:0007669"/>
    <property type="project" value="UniProtKB-UniRule"/>
</dbReference>
<dbReference type="GO" id="GO:0052381">
    <property type="term" value="F:tRNA dimethylallyltransferase activity"/>
    <property type="evidence" value="ECO:0007669"/>
    <property type="project" value="UniProtKB-UniRule"/>
</dbReference>
<dbReference type="GO" id="GO:0006400">
    <property type="term" value="P:tRNA modification"/>
    <property type="evidence" value="ECO:0007669"/>
    <property type="project" value="TreeGrafter"/>
</dbReference>
<dbReference type="Gene3D" id="1.10.20.140">
    <property type="match status" value="1"/>
</dbReference>
<dbReference type="Gene3D" id="3.40.50.300">
    <property type="entry name" value="P-loop containing nucleotide triphosphate hydrolases"/>
    <property type="match status" value="1"/>
</dbReference>
<dbReference type="HAMAP" id="MF_00185">
    <property type="entry name" value="IPP_trans"/>
    <property type="match status" value="1"/>
</dbReference>
<dbReference type="InterPro" id="IPR039657">
    <property type="entry name" value="Dimethylallyltransferase"/>
</dbReference>
<dbReference type="InterPro" id="IPR018022">
    <property type="entry name" value="IPT"/>
</dbReference>
<dbReference type="InterPro" id="IPR027417">
    <property type="entry name" value="P-loop_NTPase"/>
</dbReference>
<dbReference type="NCBIfam" id="TIGR00174">
    <property type="entry name" value="miaA"/>
    <property type="match status" value="1"/>
</dbReference>
<dbReference type="PANTHER" id="PTHR11088">
    <property type="entry name" value="TRNA DIMETHYLALLYLTRANSFERASE"/>
    <property type="match status" value="1"/>
</dbReference>
<dbReference type="PANTHER" id="PTHR11088:SF60">
    <property type="entry name" value="TRNA DIMETHYLALLYLTRANSFERASE"/>
    <property type="match status" value="1"/>
</dbReference>
<dbReference type="Pfam" id="PF01715">
    <property type="entry name" value="IPPT"/>
    <property type="match status" value="1"/>
</dbReference>
<dbReference type="SUPFAM" id="SSF52540">
    <property type="entry name" value="P-loop containing nucleoside triphosphate hydrolases"/>
    <property type="match status" value="1"/>
</dbReference>